<organism>
    <name type="scientific">Aspergillus terreus (strain NIH 2624 / FGSC A1156)</name>
    <dbReference type="NCBI Taxonomy" id="341663"/>
    <lineage>
        <taxon>Eukaryota</taxon>
        <taxon>Fungi</taxon>
        <taxon>Dikarya</taxon>
        <taxon>Ascomycota</taxon>
        <taxon>Pezizomycotina</taxon>
        <taxon>Eurotiomycetes</taxon>
        <taxon>Eurotiomycetidae</taxon>
        <taxon>Eurotiales</taxon>
        <taxon>Aspergillaceae</taxon>
        <taxon>Aspergillus</taxon>
        <taxon>Aspergillus subgen. Circumdati</taxon>
    </lineage>
</organism>
<gene>
    <name type="primary">prp5</name>
    <name type="ORF">ATEG_00181</name>
</gene>
<accession>Q0D1K3</accession>
<dbReference type="EC" id="3.6.4.13"/>
<dbReference type="EMBL" id="CH476594">
    <property type="protein sequence ID" value="EAU38827.1"/>
    <property type="molecule type" value="Genomic_DNA"/>
</dbReference>
<dbReference type="RefSeq" id="XP_001210267.1">
    <property type="nucleotide sequence ID" value="XM_001210267.1"/>
</dbReference>
<dbReference type="SMR" id="Q0D1K3"/>
<dbReference type="STRING" id="341663.Q0D1K3"/>
<dbReference type="EnsemblFungi" id="EAU38827">
    <property type="protein sequence ID" value="EAU38827"/>
    <property type="gene ID" value="ATEG_00181"/>
</dbReference>
<dbReference type="GeneID" id="4354762"/>
<dbReference type="VEuPathDB" id="FungiDB:ATEG_00181"/>
<dbReference type="eggNOG" id="KOG0334">
    <property type="taxonomic scope" value="Eukaryota"/>
</dbReference>
<dbReference type="HOGENOM" id="CLU_003041_0_3_1"/>
<dbReference type="OMA" id="QLPMKKW"/>
<dbReference type="OrthoDB" id="196131at2759"/>
<dbReference type="Proteomes" id="UP000007963">
    <property type="component" value="Unassembled WGS sequence"/>
</dbReference>
<dbReference type="GO" id="GO:0005634">
    <property type="term" value="C:nucleus"/>
    <property type="evidence" value="ECO:0007669"/>
    <property type="project" value="UniProtKB-SubCell"/>
</dbReference>
<dbReference type="GO" id="GO:0005524">
    <property type="term" value="F:ATP binding"/>
    <property type="evidence" value="ECO:0007669"/>
    <property type="project" value="UniProtKB-KW"/>
</dbReference>
<dbReference type="GO" id="GO:0016887">
    <property type="term" value="F:ATP hydrolysis activity"/>
    <property type="evidence" value="ECO:0007669"/>
    <property type="project" value="RHEA"/>
</dbReference>
<dbReference type="GO" id="GO:0003676">
    <property type="term" value="F:nucleic acid binding"/>
    <property type="evidence" value="ECO:0007669"/>
    <property type="project" value="InterPro"/>
</dbReference>
<dbReference type="GO" id="GO:0003724">
    <property type="term" value="F:RNA helicase activity"/>
    <property type="evidence" value="ECO:0007669"/>
    <property type="project" value="UniProtKB-EC"/>
</dbReference>
<dbReference type="GO" id="GO:0006397">
    <property type="term" value="P:mRNA processing"/>
    <property type="evidence" value="ECO:0007669"/>
    <property type="project" value="UniProtKB-KW"/>
</dbReference>
<dbReference type="GO" id="GO:0008380">
    <property type="term" value="P:RNA splicing"/>
    <property type="evidence" value="ECO:0007669"/>
    <property type="project" value="UniProtKB-KW"/>
</dbReference>
<dbReference type="CDD" id="cd17953">
    <property type="entry name" value="DEADc_DDX46"/>
    <property type="match status" value="1"/>
</dbReference>
<dbReference type="CDD" id="cd18787">
    <property type="entry name" value="SF2_C_DEAD"/>
    <property type="match status" value="1"/>
</dbReference>
<dbReference type="FunFam" id="3.40.50.300:FF:000079">
    <property type="entry name" value="probable ATP-dependent RNA helicase DDX17"/>
    <property type="match status" value="1"/>
</dbReference>
<dbReference type="Gene3D" id="3.40.50.300">
    <property type="entry name" value="P-loop containing nucleotide triphosphate hydrolases"/>
    <property type="match status" value="2"/>
</dbReference>
<dbReference type="InterPro" id="IPR011545">
    <property type="entry name" value="DEAD/DEAH_box_helicase_dom"/>
</dbReference>
<dbReference type="InterPro" id="IPR014001">
    <property type="entry name" value="Helicase_ATP-bd"/>
</dbReference>
<dbReference type="InterPro" id="IPR001650">
    <property type="entry name" value="Helicase_C-like"/>
</dbReference>
<dbReference type="InterPro" id="IPR027417">
    <property type="entry name" value="P-loop_NTPase"/>
</dbReference>
<dbReference type="InterPro" id="IPR056149">
    <property type="entry name" value="PRP5/DDX46/KHDC4_KH"/>
</dbReference>
<dbReference type="InterPro" id="IPR000629">
    <property type="entry name" value="RNA-helicase_DEAD-box_CS"/>
</dbReference>
<dbReference type="InterPro" id="IPR014014">
    <property type="entry name" value="RNA_helicase_DEAD_Q_motif"/>
</dbReference>
<dbReference type="PANTHER" id="PTHR47958">
    <property type="entry name" value="ATP-DEPENDENT RNA HELICASE DBP3"/>
    <property type="match status" value="1"/>
</dbReference>
<dbReference type="Pfam" id="PF00270">
    <property type="entry name" value="DEAD"/>
    <property type="match status" value="1"/>
</dbReference>
<dbReference type="Pfam" id="PF00271">
    <property type="entry name" value="Helicase_C"/>
    <property type="match status" value="1"/>
</dbReference>
<dbReference type="Pfam" id="PF23469">
    <property type="entry name" value="KH_12"/>
    <property type="match status" value="1"/>
</dbReference>
<dbReference type="SMART" id="SM00487">
    <property type="entry name" value="DEXDc"/>
    <property type="match status" value="1"/>
</dbReference>
<dbReference type="SMART" id="SM00490">
    <property type="entry name" value="HELICc"/>
    <property type="match status" value="1"/>
</dbReference>
<dbReference type="SUPFAM" id="SSF52540">
    <property type="entry name" value="P-loop containing nucleoside triphosphate hydrolases"/>
    <property type="match status" value="1"/>
</dbReference>
<dbReference type="PROSITE" id="PS00039">
    <property type="entry name" value="DEAD_ATP_HELICASE"/>
    <property type="match status" value="1"/>
</dbReference>
<dbReference type="PROSITE" id="PS51192">
    <property type="entry name" value="HELICASE_ATP_BIND_1"/>
    <property type="match status" value="1"/>
</dbReference>
<dbReference type="PROSITE" id="PS51194">
    <property type="entry name" value="HELICASE_CTER"/>
    <property type="match status" value="1"/>
</dbReference>
<dbReference type="PROSITE" id="PS51195">
    <property type="entry name" value="Q_MOTIF"/>
    <property type="match status" value="2"/>
</dbReference>
<proteinExistence type="inferred from homology"/>
<name>PRP5_ASPTN</name>
<evidence type="ECO:0000250" key="1"/>
<evidence type="ECO:0000255" key="2">
    <source>
        <dbReference type="PROSITE-ProRule" id="PRU00541"/>
    </source>
</evidence>
<evidence type="ECO:0000255" key="3">
    <source>
        <dbReference type="PROSITE-ProRule" id="PRU00542"/>
    </source>
</evidence>
<evidence type="ECO:0000256" key="4">
    <source>
        <dbReference type="SAM" id="MobiDB-lite"/>
    </source>
</evidence>
<evidence type="ECO:0000305" key="5"/>
<keyword id="KW-0067">ATP-binding</keyword>
<keyword id="KW-0347">Helicase</keyword>
<keyword id="KW-0378">Hydrolase</keyword>
<keyword id="KW-0507">mRNA processing</keyword>
<keyword id="KW-0508">mRNA splicing</keyword>
<keyword id="KW-0547">Nucleotide-binding</keyword>
<keyword id="KW-0539">Nucleus</keyword>
<keyword id="KW-1185">Reference proteome</keyword>
<sequence>MARHGDTRSPSPVGSTHSSSRRSRRDDDRYERTKRDDGRSYRRSRSPERRYRERDRESYRRRERSIARRDDYRDEDSYRPIRRDRSRDRRRSRDRGDDRDYRRRSRERDFRCRRDDSRDRARRRADDSTDLKHKSRRDSSRDRPKDSASRSRETSKPATPAPTAVPTDEEKRAERLAKLEAWKQKQAAERERKQREAAAAGGARSLLDEIDRKSGLSPAVGSPQSPATPSTTADATPAPYAGKFDPKAIAKSAAPAQAASNVLGDDVAVPTAVKASATSTTTKVQANKPSTASKASAPLKAKGVVGRFGLGTKQAADMEKSSATKTLGFGEEESTRRKLERLPTPPLDDANDTNKPEDNAEDDDDVDMHEGDTEEQTAAAARAAAERREERLQNEASKTNGDTTMNDAPHSQEGEKMEVDAKEEEEIDPLDAFMSELVETAPPKKTTGAKFSKAKEQQPEAIFGDENDPDITAVGEGDADDFLAIANKAKKKKDIPKVDHAKMEYEPFRKKFYTEPSDLAQMSEGELASLRLELDGIKVRGVDVPKPVQKWSQCGLGVQTLDVIDRLGYENPTSIQSQAIPAIMSGRDVIGVAKTGSGKTVAFLIPMFRHIKDQRPLENMEGPIGLIMTPTRELATQIHKDCKPFLKALNLRAVCAYGGAPIKDQIAELKRGAEIVVCTPGRMIDLLAANAGRVTNLRRVTYVVLDEADRMFDMGFEPQVMKIMANVRPDRQTVLFSATFPRNMEALARKTLNKPVEIVVGGKSVVAPEITQIVEVRNEDKKFVRLLELLGNLYSSDENEDARALIFVERQEAADTLLRELMRKGYPCMSIHGGKDQIDRDSTIEDFKAGIFPVLIATSVAARGLDVKQLKLVVNYDAPNHLEDYVHRAGRTGRAGNTGTAVTFLTEDQERFSVDIAKALKQSGQKVPEPVQQMVDSFLEKVKAGKEKASASGFGGKGLERLDQERDAARMRERRTYKTGEEGEEEEEKEEKNEQAEERFNKVLSSVQSASAPSLPGVPKGIDLDGKITVHRTEKDANGAKNPLDKVGSAVADIHARLSRAGVMRSGVPIDNRGPDAGAFHATLEINDFPQKARWAVTNRTNVAKILEATGTSITTKGSFYPTGKEPGPGENPKLYILVEGETELAVTNAMRELMRLLKEGTLAAADSDARAPVGGRYNVV</sequence>
<feature type="chain" id="PRO_0000282692" description="Pre-mRNA-processing ATP-dependent RNA helicase prp5">
    <location>
        <begin position="1"/>
        <end position="1181"/>
    </location>
</feature>
<feature type="domain" description="Helicase ATP-binding" evidence="2">
    <location>
        <begin position="580"/>
        <end position="758"/>
    </location>
</feature>
<feature type="domain" description="Helicase C-terminal" evidence="3">
    <location>
        <begin position="785"/>
        <end position="935"/>
    </location>
</feature>
<feature type="region of interest" description="Disordered" evidence="4">
    <location>
        <begin position="1"/>
        <end position="243"/>
    </location>
</feature>
<feature type="region of interest" description="Disordered" evidence="4">
    <location>
        <begin position="275"/>
        <end position="423"/>
    </location>
</feature>
<feature type="region of interest" description="Disordered" evidence="4">
    <location>
        <begin position="949"/>
        <end position="998"/>
    </location>
</feature>
<feature type="short sequence motif" description="Q motif">
    <location>
        <begin position="549"/>
        <end position="577"/>
    </location>
</feature>
<feature type="short sequence motif" description="DEAD box">
    <location>
        <begin position="706"/>
        <end position="709"/>
    </location>
</feature>
<feature type="compositionally biased region" description="Polar residues" evidence="4">
    <location>
        <begin position="8"/>
        <end position="17"/>
    </location>
</feature>
<feature type="compositionally biased region" description="Basic and acidic residues" evidence="4">
    <location>
        <begin position="24"/>
        <end position="87"/>
    </location>
</feature>
<feature type="compositionally biased region" description="Basic and acidic residues" evidence="4">
    <location>
        <begin position="94"/>
        <end position="155"/>
    </location>
</feature>
<feature type="compositionally biased region" description="Low complexity" evidence="4">
    <location>
        <begin position="157"/>
        <end position="166"/>
    </location>
</feature>
<feature type="compositionally biased region" description="Basic and acidic residues" evidence="4">
    <location>
        <begin position="168"/>
        <end position="196"/>
    </location>
</feature>
<feature type="compositionally biased region" description="Low complexity" evidence="4">
    <location>
        <begin position="222"/>
        <end position="243"/>
    </location>
</feature>
<feature type="compositionally biased region" description="Low complexity" evidence="4">
    <location>
        <begin position="275"/>
        <end position="284"/>
    </location>
</feature>
<feature type="compositionally biased region" description="Polar residues" evidence="4">
    <location>
        <begin position="285"/>
        <end position="294"/>
    </location>
</feature>
<feature type="compositionally biased region" description="Acidic residues" evidence="4">
    <location>
        <begin position="359"/>
        <end position="375"/>
    </location>
</feature>
<feature type="compositionally biased region" description="Basic and acidic residues" evidence="4">
    <location>
        <begin position="384"/>
        <end position="393"/>
    </location>
</feature>
<feature type="compositionally biased region" description="Polar residues" evidence="4">
    <location>
        <begin position="394"/>
        <end position="406"/>
    </location>
</feature>
<feature type="compositionally biased region" description="Basic and acidic residues" evidence="4">
    <location>
        <begin position="410"/>
        <end position="420"/>
    </location>
</feature>
<feature type="compositionally biased region" description="Basic and acidic residues" evidence="4">
    <location>
        <begin position="958"/>
        <end position="981"/>
    </location>
</feature>
<feature type="binding site" evidence="2">
    <location>
        <begin position="593"/>
        <end position="600"/>
    </location>
    <ligand>
        <name>ATP</name>
        <dbReference type="ChEBI" id="CHEBI:30616"/>
    </ligand>
</feature>
<protein>
    <recommendedName>
        <fullName>Pre-mRNA-processing ATP-dependent RNA helicase prp5</fullName>
        <ecNumber>3.6.4.13</ecNumber>
    </recommendedName>
</protein>
<comment type="function">
    <text evidence="1">ATP-dependent RNA helicase involved spliceosome assembly and in nuclear splicing. Catalyzes an ATP-dependent conformational change of U2 snRNP. Bridges U1 and U2 snRNPs and enables stable U2 snRNP association with intron RNA (By similarity).</text>
</comment>
<comment type="catalytic activity">
    <reaction>
        <text>ATP + H2O = ADP + phosphate + H(+)</text>
        <dbReference type="Rhea" id="RHEA:13065"/>
        <dbReference type="ChEBI" id="CHEBI:15377"/>
        <dbReference type="ChEBI" id="CHEBI:15378"/>
        <dbReference type="ChEBI" id="CHEBI:30616"/>
        <dbReference type="ChEBI" id="CHEBI:43474"/>
        <dbReference type="ChEBI" id="CHEBI:456216"/>
        <dbReference type="EC" id="3.6.4.13"/>
    </reaction>
</comment>
<comment type="subcellular location">
    <subcellularLocation>
        <location evidence="1">Nucleus</location>
    </subcellularLocation>
</comment>
<comment type="domain">
    <text>The Q motif is unique to and characteristic of the DEAD box family of RNA helicases and controls ATP binding and hydrolysis.</text>
</comment>
<comment type="similarity">
    <text evidence="5">Belongs to the DEAD box helicase family. DDX46/PRP5 subfamily.</text>
</comment>
<reference key="1">
    <citation type="submission" date="2005-09" db="EMBL/GenBank/DDBJ databases">
        <title>Annotation of the Aspergillus terreus NIH2624 genome.</title>
        <authorList>
            <person name="Birren B.W."/>
            <person name="Lander E.S."/>
            <person name="Galagan J.E."/>
            <person name="Nusbaum C."/>
            <person name="Devon K."/>
            <person name="Henn M."/>
            <person name="Ma L.-J."/>
            <person name="Jaffe D.B."/>
            <person name="Butler J."/>
            <person name="Alvarez P."/>
            <person name="Gnerre S."/>
            <person name="Grabherr M."/>
            <person name="Kleber M."/>
            <person name="Mauceli E.W."/>
            <person name="Brockman W."/>
            <person name="Rounsley S."/>
            <person name="Young S.K."/>
            <person name="LaButti K."/>
            <person name="Pushparaj V."/>
            <person name="DeCaprio D."/>
            <person name="Crawford M."/>
            <person name="Koehrsen M."/>
            <person name="Engels R."/>
            <person name="Montgomery P."/>
            <person name="Pearson M."/>
            <person name="Howarth C."/>
            <person name="Larson L."/>
            <person name="Luoma S."/>
            <person name="White J."/>
            <person name="Alvarado L."/>
            <person name="Kodira C.D."/>
            <person name="Zeng Q."/>
            <person name="Oleary S."/>
            <person name="Yandava C."/>
            <person name="Denning D.W."/>
            <person name="Nierman W.C."/>
            <person name="Milne T."/>
            <person name="Madden K."/>
        </authorList>
    </citation>
    <scope>NUCLEOTIDE SEQUENCE [LARGE SCALE GENOMIC DNA]</scope>
    <source>
        <strain>NIH 2624 / FGSC A1156</strain>
    </source>
</reference>